<gene>
    <name type="primary">hyaA</name>
    <name type="ordered locus">SF0973</name>
    <name type="ordered locus">S1040</name>
</gene>
<comment type="function">
    <text evidence="1">This is one of three S.flexneri hydrogenases synthesized in response to different physiological conditions. HYD1 is believed to have a role in hydrogen cycling during fermentative growth (By similarity).</text>
</comment>
<comment type="catalytic activity">
    <reaction>
        <text>H2 + A = AH2</text>
        <dbReference type="Rhea" id="RHEA:12116"/>
        <dbReference type="ChEBI" id="CHEBI:13193"/>
        <dbReference type="ChEBI" id="CHEBI:17499"/>
        <dbReference type="ChEBI" id="CHEBI:18276"/>
        <dbReference type="EC" id="1.12.99.6"/>
    </reaction>
</comment>
<comment type="cofactor">
    <cofactor evidence="2">
        <name>[4Fe-4S] cluster</name>
        <dbReference type="ChEBI" id="CHEBI:49883"/>
    </cofactor>
    <text evidence="2">Binds 2 [4Fe-4S] clusters.</text>
</comment>
<comment type="cofactor">
    <cofactor evidence="2">
        <name>[3Fe-4S] cluster</name>
        <dbReference type="ChEBI" id="CHEBI:21137"/>
    </cofactor>
    <text evidence="2">Binds 1 [3Fe-4S] cluster.</text>
</comment>
<comment type="subunit">
    <text evidence="1">Heterodimer of a large and a small subunit.</text>
</comment>
<comment type="subcellular location">
    <subcellularLocation>
        <location evidence="1">Cell inner membrane</location>
        <topology evidence="1">Single-pass type I membrane protein</topology>
        <orientation evidence="1">Periplasmic side</orientation>
    </subcellularLocation>
</comment>
<comment type="PTM">
    <text>Predicted to be exported by the Tat system. The position of the signal peptide cleavage has not been experimentally proven.</text>
</comment>
<comment type="similarity">
    <text evidence="6">Belongs to the [NiFe]/[NiFeSe] hydrogenase small subunit family.</text>
</comment>
<dbReference type="EC" id="1.12.99.6"/>
<dbReference type="EMBL" id="AE005674">
    <property type="protein sequence ID" value="AAN42601.2"/>
    <property type="molecule type" value="Genomic_DNA"/>
</dbReference>
<dbReference type="EMBL" id="AE014073">
    <property type="protein sequence ID" value="AAP16487.1"/>
    <property type="molecule type" value="Genomic_DNA"/>
</dbReference>
<dbReference type="RefSeq" id="NP_706894.2">
    <property type="nucleotide sequence ID" value="NC_004337.2"/>
</dbReference>
<dbReference type="RefSeq" id="WP_001058324.1">
    <property type="nucleotide sequence ID" value="NZ_CP123365.1"/>
</dbReference>
<dbReference type="SMR" id="Q83RW9"/>
<dbReference type="STRING" id="198214.SF0973"/>
<dbReference type="PaxDb" id="198214-SF0973"/>
<dbReference type="GeneID" id="1023950"/>
<dbReference type="KEGG" id="sfl:SF0973"/>
<dbReference type="KEGG" id="sfx:S1040"/>
<dbReference type="PATRIC" id="fig|198214.7.peg.1132"/>
<dbReference type="HOGENOM" id="CLU_046107_0_0_6"/>
<dbReference type="Proteomes" id="UP000001006">
    <property type="component" value="Chromosome"/>
</dbReference>
<dbReference type="Proteomes" id="UP000002673">
    <property type="component" value="Chromosome"/>
</dbReference>
<dbReference type="GO" id="GO:0044569">
    <property type="term" value="C:[Ni-Fe] hydrogenase complex"/>
    <property type="evidence" value="ECO:0007669"/>
    <property type="project" value="TreeGrafter"/>
</dbReference>
<dbReference type="GO" id="GO:0009375">
    <property type="term" value="C:ferredoxin hydrogenase complex"/>
    <property type="evidence" value="ECO:0007669"/>
    <property type="project" value="InterPro"/>
</dbReference>
<dbReference type="GO" id="GO:0005886">
    <property type="term" value="C:plasma membrane"/>
    <property type="evidence" value="ECO:0007669"/>
    <property type="project" value="UniProtKB-SubCell"/>
</dbReference>
<dbReference type="GO" id="GO:0051538">
    <property type="term" value="F:3 iron, 4 sulfur cluster binding"/>
    <property type="evidence" value="ECO:0007669"/>
    <property type="project" value="UniProtKB-KW"/>
</dbReference>
<dbReference type="GO" id="GO:0051539">
    <property type="term" value="F:4 iron, 4 sulfur cluster binding"/>
    <property type="evidence" value="ECO:0007669"/>
    <property type="project" value="UniProtKB-KW"/>
</dbReference>
<dbReference type="GO" id="GO:0009055">
    <property type="term" value="F:electron transfer activity"/>
    <property type="evidence" value="ECO:0007669"/>
    <property type="project" value="TreeGrafter"/>
</dbReference>
<dbReference type="GO" id="GO:0008901">
    <property type="term" value="F:ferredoxin hydrogenase activity"/>
    <property type="evidence" value="ECO:0007669"/>
    <property type="project" value="InterPro"/>
</dbReference>
<dbReference type="GO" id="GO:0033748">
    <property type="term" value="F:hydrogenase (acceptor) activity"/>
    <property type="evidence" value="ECO:0007669"/>
    <property type="project" value="UniProtKB-EC"/>
</dbReference>
<dbReference type="GO" id="GO:0046872">
    <property type="term" value="F:metal ion binding"/>
    <property type="evidence" value="ECO:0007669"/>
    <property type="project" value="UniProtKB-KW"/>
</dbReference>
<dbReference type="GO" id="GO:0009061">
    <property type="term" value="P:anaerobic respiration"/>
    <property type="evidence" value="ECO:0007669"/>
    <property type="project" value="TreeGrafter"/>
</dbReference>
<dbReference type="FunFam" id="3.40.50.700:FF:000002">
    <property type="entry name" value="Hydrogenase-1 small chain"/>
    <property type="match status" value="1"/>
</dbReference>
<dbReference type="FunFam" id="4.10.480.10:FF:000002">
    <property type="entry name" value="Hydrogenase-1 small chain"/>
    <property type="match status" value="1"/>
</dbReference>
<dbReference type="Gene3D" id="4.10.480.10">
    <property type="entry name" value="Cytochrome-c3 hydrogenase, C-terminal domain"/>
    <property type="match status" value="1"/>
</dbReference>
<dbReference type="Gene3D" id="3.40.50.700">
    <property type="entry name" value="NADH:ubiquinone oxidoreductase-like, 20kDa subunit"/>
    <property type="match status" value="1"/>
</dbReference>
<dbReference type="InterPro" id="IPR027394">
    <property type="entry name" value="Cytochrome-c3_hydrogenase_C"/>
</dbReference>
<dbReference type="InterPro" id="IPR006137">
    <property type="entry name" value="NADH_UbQ_OxRdtase-like_20kDa"/>
</dbReference>
<dbReference type="InterPro" id="IPR037148">
    <property type="entry name" value="NiFe-Hase_small_C_sf"/>
</dbReference>
<dbReference type="InterPro" id="IPR037024">
    <property type="entry name" value="NiFe_Hase_small_N_sf"/>
</dbReference>
<dbReference type="InterPro" id="IPR001821">
    <property type="entry name" value="NiFe_hydrogenase_ssu"/>
</dbReference>
<dbReference type="InterPro" id="IPR006311">
    <property type="entry name" value="TAT_signal"/>
</dbReference>
<dbReference type="InterPro" id="IPR019546">
    <property type="entry name" value="TAT_signal_bac_arc"/>
</dbReference>
<dbReference type="NCBIfam" id="TIGR00391">
    <property type="entry name" value="hydA"/>
    <property type="match status" value="1"/>
</dbReference>
<dbReference type="NCBIfam" id="TIGR01409">
    <property type="entry name" value="TAT_signal_seq"/>
    <property type="match status" value="1"/>
</dbReference>
<dbReference type="PANTHER" id="PTHR30013:SF6">
    <property type="entry name" value="HYDROGENASE-1 SMALL CHAIN"/>
    <property type="match status" value="1"/>
</dbReference>
<dbReference type="PANTHER" id="PTHR30013">
    <property type="entry name" value="NIFE / NIFESE HYDROGENASE SMALL SUBUNIT FAMILY MEMBER"/>
    <property type="match status" value="1"/>
</dbReference>
<dbReference type="Pfam" id="PF14720">
    <property type="entry name" value="NiFe_hyd_SSU_C"/>
    <property type="match status" value="1"/>
</dbReference>
<dbReference type="Pfam" id="PF01058">
    <property type="entry name" value="Oxidored_q6"/>
    <property type="match status" value="1"/>
</dbReference>
<dbReference type="PIRSF" id="PIRSF000310">
    <property type="entry name" value="NiFe_hyd_ssu"/>
    <property type="match status" value="1"/>
</dbReference>
<dbReference type="PRINTS" id="PR00614">
    <property type="entry name" value="NIHGNASESMLL"/>
</dbReference>
<dbReference type="SUPFAM" id="SSF56770">
    <property type="entry name" value="HydA/Nqo6-like"/>
    <property type="match status" value="1"/>
</dbReference>
<dbReference type="PROSITE" id="PS51318">
    <property type="entry name" value="TAT"/>
    <property type="match status" value="1"/>
</dbReference>
<proteinExistence type="inferred from homology"/>
<name>MBHS_SHIFL</name>
<protein>
    <recommendedName>
        <fullName>Hydrogenase-1 small chain</fullName>
        <shortName>HYD1</shortName>
        <ecNumber>1.12.99.6</ecNumber>
    </recommendedName>
    <alternativeName>
        <fullName>Membrane-bound hydrogenase 1 small subunit</fullName>
    </alternativeName>
    <alternativeName>
        <fullName>NiFe hydrogenase</fullName>
    </alternativeName>
</protein>
<evidence type="ECO:0000250" key="1"/>
<evidence type="ECO:0000250" key="2">
    <source>
        <dbReference type="UniProtKB" id="P21853"/>
    </source>
</evidence>
<evidence type="ECO:0000255" key="3"/>
<evidence type="ECO:0000255" key="4">
    <source>
        <dbReference type="PROSITE-ProRule" id="PRU00648"/>
    </source>
</evidence>
<evidence type="ECO:0000256" key="5">
    <source>
        <dbReference type="SAM" id="MobiDB-lite"/>
    </source>
</evidence>
<evidence type="ECO:0000305" key="6"/>
<reference key="1">
    <citation type="journal article" date="2002" name="Nucleic Acids Res.">
        <title>Genome sequence of Shigella flexneri 2a: insights into pathogenicity through comparison with genomes of Escherichia coli K12 and O157.</title>
        <authorList>
            <person name="Jin Q."/>
            <person name="Yuan Z."/>
            <person name="Xu J."/>
            <person name="Wang Y."/>
            <person name="Shen Y."/>
            <person name="Lu W."/>
            <person name="Wang J."/>
            <person name="Liu H."/>
            <person name="Yang J."/>
            <person name="Yang F."/>
            <person name="Zhang X."/>
            <person name="Zhang J."/>
            <person name="Yang G."/>
            <person name="Wu H."/>
            <person name="Qu D."/>
            <person name="Dong J."/>
            <person name="Sun L."/>
            <person name="Xue Y."/>
            <person name="Zhao A."/>
            <person name="Gao Y."/>
            <person name="Zhu J."/>
            <person name="Kan B."/>
            <person name="Ding K."/>
            <person name="Chen S."/>
            <person name="Cheng H."/>
            <person name="Yao Z."/>
            <person name="He B."/>
            <person name="Chen R."/>
            <person name="Ma D."/>
            <person name="Qiang B."/>
            <person name="Wen Y."/>
            <person name="Hou Y."/>
            <person name="Yu J."/>
        </authorList>
    </citation>
    <scope>NUCLEOTIDE SEQUENCE [LARGE SCALE GENOMIC DNA]</scope>
    <source>
        <strain>301 / Serotype 2a</strain>
    </source>
</reference>
<reference key="2">
    <citation type="journal article" date="2003" name="Infect. Immun.">
        <title>Complete genome sequence and comparative genomics of Shigella flexneri serotype 2a strain 2457T.</title>
        <authorList>
            <person name="Wei J."/>
            <person name="Goldberg M.B."/>
            <person name="Burland V."/>
            <person name="Venkatesan M.M."/>
            <person name="Deng W."/>
            <person name="Fournier G."/>
            <person name="Mayhew G.F."/>
            <person name="Plunkett G. III"/>
            <person name="Rose D.J."/>
            <person name="Darling A."/>
            <person name="Mau B."/>
            <person name="Perna N.T."/>
            <person name="Payne S.M."/>
            <person name="Runyen-Janecky L.J."/>
            <person name="Zhou S."/>
            <person name="Schwartz D.C."/>
            <person name="Blattner F.R."/>
        </authorList>
    </citation>
    <scope>NUCLEOTIDE SEQUENCE [LARGE SCALE GENOMIC DNA]</scope>
    <source>
        <strain>ATCC 700930 / 2457T / Serotype 2a</strain>
    </source>
</reference>
<sequence length="372" mass="40697">MNNEETFYQAMRRQGVTRRSFLKYCSLAATSLGLGAGMAPKIAWALENKPRIPVVWIHGLECTCCTESFIRSAHPLAKDVILSLISLDYDDTLMAAAGTQAEEVFEDIITQYNGKYILAVEGNPPLGEQGMFCISSGRPFIEKLKRAAAGASAIIAWGTCASWGCVQAARPNPTQATPIDKVITDKPIIKVPGCPPIPDVMSAIITYMVTFDRLPDVDRMGRPLMFYGQRIHDKCYRRAHFDAGEFVQSWDDDAARKGYCLYKMGCKGPTTYNACSSTRWNDGVSFPIQSGHGCLGCAENGFWDRGSFYSRVVDIPQMGTHSTADTVGLTALGVVAAAVGVHAVASSVDQRRRHNQQPTETEHQPGNEDKQA</sequence>
<feature type="signal peptide" description="Tat-type signal" evidence="4">
    <location>
        <begin position="1"/>
        <end position="45"/>
    </location>
</feature>
<feature type="chain" id="PRO_0000013429" description="Hydrogenase-1 small chain">
    <location>
        <begin position="46"/>
        <end position="372"/>
    </location>
</feature>
<feature type="topological domain" description="Periplasmic" evidence="3">
    <location>
        <begin position="46"/>
        <end position="325"/>
    </location>
</feature>
<feature type="transmembrane region" description="Helical" evidence="3">
    <location>
        <begin position="326"/>
        <end position="346"/>
    </location>
</feature>
<feature type="topological domain" description="Cytoplasmic" evidence="3">
    <location>
        <begin position="347"/>
        <end position="372"/>
    </location>
</feature>
<feature type="region of interest" description="Disordered" evidence="5">
    <location>
        <begin position="346"/>
        <end position="372"/>
    </location>
</feature>
<feature type="compositionally biased region" description="Basic and acidic residues" evidence="5">
    <location>
        <begin position="360"/>
        <end position="372"/>
    </location>
</feature>
<feature type="binding site" evidence="2">
    <location>
        <position position="62"/>
    </location>
    <ligand>
        <name>[4Fe-4S] cluster</name>
        <dbReference type="ChEBI" id="CHEBI:49883"/>
        <label>1</label>
    </ligand>
</feature>
<feature type="binding site" evidence="2">
    <location>
        <position position="65"/>
    </location>
    <ligand>
        <name>[4Fe-4S] cluster</name>
        <dbReference type="ChEBI" id="CHEBI:49883"/>
        <label>1</label>
    </ligand>
</feature>
<feature type="binding site" evidence="2">
    <location>
        <position position="160"/>
    </location>
    <ligand>
        <name>[4Fe-4S] cluster</name>
        <dbReference type="ChEBI" id="CHEBI:49883"/>
        <label>1</label>
    </ligand>
</feature>
<feature type="binding site" evidence="2">
    <location>
        <position position="194"/>
    </location>
    <ligand>
        <name>[4Fe-4S] cluster</name>
        <dbReference type="ChEBI" id="CHEBI:49883"/>
        <label>1</label>
    </ligand>
</feature>
<feature type="binding site" evidence="2">
    <location>
        <position position="232"/>
    </location>
    <ligand>
        <name>[4Fe-4S] cluster</name>
        <dbReference type="ChEBI" id="CHEBI:49883"/>
        <label>2</label>
    </ligand>
</feature>
<feature type="binding site" evidence="2">
    <location>
        <position position="235"/>
    </location>
    <ligand>
        <name>[4Fe-4S] cluster</name>
        <dbReference type="ChEBI" id="CHEBI:49883"/>
        <label>2</label>
    </ligand>
</feature>
<feature type="binding site" evidence="2">
    <location>
        <position position="260"/>
    </location>
    <ligand>
        <name>[4Fe-4S] cluster</name>
        <dbReference type="ChEBI" id="CHEBI:49883"/>
        <label>2</label>
    </ligand>
</feature>
<feature type="binding site" evidence="2">
    <location>
        <position position="266"/>
    </location>
    <ligand>
        <name>[4Fe-4S] cluster</name>
        <dbReference type="ChEBI" id="CHEBI:49883"/>
        <label>2</label>
    </ligand>
</feature>
<feature type="binding site" evidence="2">
    <location>
        <position position="275"/>
    </location>
    <ligand>
        <name>[3Fe-4S] cluster</name>
        <dbReference type="ChEBI" id="CHEBI:21137"/>
    </ligand>
</feature>
<feature type="binding site" evidence="2">
    <location>
        <position position="294"/>
    </location>
    <ligand>
        <name>[3Fe-4S] cluster</name>
        <dbReference type="ChEBI" id="CHEBI:21137"/>
    </ligand>
</feature>
<feature type="binding site" evidence="2">
    <location>
        <position position="297"/>
    </location>
    <ligand>
        <name>[3Fe-4S] cluster</name>
        <dbReference type="ChEBI" id="CHEBI:21137"/>
    </ligand>
</feature>
<feature type="sequence conflict" description="In Ref. 2; AAP16487." evidence="6" ref="2">
    <original>S</original>
    <variation>A</variation>
    <location>
        <position position="347"/>
    </location>
</feature>
<keyword id="KW-0003">3Fe-4S</keyword>
<keyword id="KW-0004">4Fe-4S</keyword>
<keyword id="KW-0997">Cell inner membrane</keyword>
<keyword id="KW-1003">Cell membrane</keyword>
<keyword id="KW-0408">Iron</keyword>
<keyword id="KW-0411">Iron-sulfur</keyword>
<keyword id="KW-0472">Membrane</keyword>
<keyword id="KW-0479">Metal-binding</keyword>
<keyword id="KW-0560">Oxidoreductase</keyword>
<keyword id="KW-1185">Reference proteome</keyword>
<keyword id="KW-0732">Signal</keyword>
<keyword id="KW-0812">Transmembrane</keyword>
<keyword id="KW-1133">Transmembrane helix</keyword>
<organism>
    <name type="scientific">Shigella flexneri</name>
    <dbReference type="NCBI Taxonomy" id="623"/>
    <lineage>
        <taxon>Bacteria</taxon>
        <taxon>Pseudomonadati</taxon>
        <taxon>Pseudomonadota</taxon>
        <taxon>Gammaproteobacteria</taxon>
        <taxon>Enterobacterales</taxon>
        <taxon>Enterobacteriaceae</taxon>
        <taxon>Shigella</taxon>
    </lineage>
</organism>
<accession>Q83RW9</accession>